<keyword id="KW-0963">Cytoplasm</keyword>
<keyword id="KW-0378">Hydrolase</keyword>
<keyword id="KW-0694">RNA-binding</keyword>
<keyword id="KW-0820">tRNA-binding</keyword>
<evidence type="ECO:0000255" key="1">
    <source>
        <dbReference type="HAMAP-Rule" id="MF_00083"/>
    </source>
</evidence>
<protein>
    <recommendedName>
        <fullName evidence="1">Peptidyl-tRNA hydrolase</fullName>
        <shortName evidence="1">Pth</shortName>
        <ecNumber evidence="1">3.1.1.29</ecNumber>
    </recommendedName>
</protein>
<name>PTH_LATSK</name>
<comment type="function">
    <text evidence="1">Hydrolyzes ribosome-free peptidyl-tRNAs (with 1 or more amino acids incorporated), which drop off the ribosome during protein synthesis, or as a result of ribosome stalling.</text>
</comment>
<comment type="function">
    <text evidence="1">Catalyzes the release of premature peptidyl moieties from peptidyl-tRNA molecules trapped in stalled 50S ribosomal subunits, and thus maintains levels of free tRNAs and 50S ribosomes.</text>
</comment>
<comment type="catalytic activity">
    <reaction evidence="1">
        <text>an N-acyl-L-alpha-aminoacyl-tRNA + H2O = an N-acyl-L-amino acid + a tRNA + H(+)</text>
        <dbReference type="Rhea" id="RHEA:54448"/>
        <dbReference type="Rhea" id="RHEA-COMP:10123"/>
        <dbReference type="Rhea" id="RHEA-COMP:13883"/>
        <dbReference type="ChEBI" id="CHEBI:15377"/>
        <dbReference type="ChEBI" id="CHEBI:15378"/>
        <dbReference type="ChEBI" id="CHEBI:59874"/>
        <dbReference type="ChEBI" id="CHEBI:78442"/>
        <dbReference type="ChEBI" id="CHEBI:138191"/>
        <dbReference type="EC" id="3.1.1.29"/>
    </reaction>
</comment>
<comment type="subunit">
    <text evidence="1">Monomer.</text>
</comment>
<comment type="subcellular location">
    <subcellularLocation>
        <location evidence="1">Cytoplasm</location>
    </subcellularLocation>
</comment>
<comment type="similarity">
    <text evidence="1">Belongs to the PTH family.</text>
</comment>
<sequence length="177" mass="19641">MKMIVGLGNPGSKYAKTKHNIGFMVIDQLCEKYNVTLNKHDFEAEYGSFKYEGETVLLVKPLTFMNDSGRSVGPLMSYYQVGIDELLVIQDDMDLTMGKLRLRQKGSAGGHNGIKSIIAHTKSQTFKRLKIGIQHPQKSTVVNWVLTPFDKDGAPVINQAIDQACEESTTGVKMTTL</sequence>
<accession>O85235</accession>
<dbReference type="EC" id="3.1.1.29" evidence="1"/>
<dbReference type="EMBL" id="AF054624">
    <property type="protein sequence ID" value="AAD03811.1"/>
    <property type="molecule type" value="Genomic_DNA"/>
</dbReference>
<dbReference type="SMR" id="O85235"/>
<dbReference type="GO" id="GO:0005737">
    <property type="term" value="C:cytoplasm"/>
    <property type="evidence" value="ECO:0007669"/>
    <property type="project" value="UniProtKB-SubCell"/>
</dbReference>
<dbReference type="GO" id="GO:0004045">
    <property type="term" value="F:peptidyl-tRNA hydrolase activity"/>
    <property type="evidence" value="ECO:0007669"/>
    <property type="project" value="UniProtKB-UniRule"/>
</dbReference>
<dbReference type="GO" id="GO:0000049">
    <property type="term" value="F:tRNA binding"/>
    <property type="evidence" value="ECO:0007669"/>
    <property type="project" value="UniProtKB-UniRule"/>
</dbReference>
<dbReference type="GO" id="GO:0006515">
    <property type="term" value="P:protein quality control for misfolded or incompletely synthesized proteins"/>
    <property type="evidence" value="ECO:0007669"/>
    <property type="project" value="UniProtKB-UniRule"/>
</dbReference>
<dbReference type="GO" id="GO:0072344">
    <property type="term" value="P:rescue of stalled ribosome"/>
    <property type="evidence" value="ECO:0007669"/>
    <property type="project" value="UniProtKB-UniRule"/>
</dbReference>
<dbReference type="CDD" id="cd00462">
    <property type="entry name" value="PTH"/>
    <property type="match status" value="1"/>
</dbReference>
<dbReference type="FunFam" id="3.40.50.1470:FF:000001">
    <property type="entry name" value="Peptidyl-tRNA hydrolase"/>
    <property type="match status" value="1"/>
</dbReference>
<dbReference type="Gene3D" id="3.40.50.1470">
    <property type="entry name" value="Peptidyl-tRNA hydrolase"/>
    <property type="match status" value="1"/>
</dbReference>
<dbReference type="HAMAP" id="MF_00083">
    <property type="entry name" value="Pept_tRNA_hydro_bact"/>
    <property type="match status" value="1"/>
</dbReference>
<dbReference type="InterPro" id="IPR001328">
    <property type="entry name" value="Pept_tRNA_hydro"/>
</dbReference>
<dbReference type="InterPro" id="IPR018171">
    <property type="entry name" value="Pept_tRNA_hydro_CS"/>
</dbReference>
<dbReference type="InterPro" id="IPR036416">
    <property type="entry name" value="Pept_tRNA_hydro_sf"/>
</dbReference>
<dbReference type="NCBIfam" id="TIGR00447">
    <property type="entry name" value="pth"/>
    <property type="match status" value="1"/>
</dbReference>
<dbReference type="PANTHER" id="PTHR17224">
    <property type="entry name" value="PEPTIDYL-TRNA HYDROLASE"/>
    <property type="match status" value="1"/>
</dbReference>
<dbReference type="PANTHER" id="PTHR17224:SF1">
    <property type="entry name" value="PEPTIDYL-TRNA HYDROLASE"/>
    <property type="match status" value="1"/>
</dbReference>
<dbReference type="Pfam" id="PF01195">
    <property type="entry name" value="Pept_tRNA_hydro"/>
    <property type="match status" value="1"/>
</dbReference>
<dbReference type="SUPFAM" id="SSF53178">
    <property type="entry name" value="Peptidyl-tRNA hydrolase-like"/>
    <property type="match status" value="1"/>
</dbReference>
<dbReference type="PROSITE" id="PS01195">
    <property type="entry name" value="PEPT_TRNA_HYDROL_1"/>
    <property type="match status" value="1"/>
</dbReference>
<dbReference type="PROSITE" id="PS01196">
    <property type="entry name" value="PEPT_TRNA_HYDROL_2"/>
    <property type="match status" value="1"/>
</dbReference>
<feature type="chain" id="PRO_0000187756" description="Peptidyl-tRNA hydrolase">
    <location>
        <begin position="1"/>
        <end position="177"/>
    </location>
</feature>
<feature type="active site" description="Proton acceptor" evidence="1">
    <location>
        <position position="19"/>
    </location>
</feature>
<feature type="binding site" evidence="1">
    <location>
        <position position="14"/>
    </location>
    <ligand>
        <name>tRNA</name>
        <dbReference type="ChEBI" id="CHEBI:17843"/>
    </ligand>
</feature>
<feature type="binding site" evidence="1">
    <location>
        <position position="64"/>
    </location>
    <ligand>
        <name>tRNA</name>
        <dbReference type="ChEBI" id="CHEBI:17843"/>
    </ligand>
</feature>
<feature type="binding site" evidence="1">
    <location>
        <position position="66"/>
    </location>
    <ligand>
        <name>tRNA</name>
        <dbReference type="ChEBI" id="CHEBI:17843"/>
    </ligand>
</feature>
<feature type="binding site" evidence="1">
    <location>
        <position position="112"/>
    </location>
    <ligand>
        <name>tRNA</name>
        <dbReference type="ChEBI" id="CHEBI:17843"/>
    </ligand>
</feature>
<feature type="site" description="Discriminates between blocked and unblocked aminoacyl-tRNA" evidence="1">
    <location>
        <position position="9"/>
    </location>
</feature>
<feature type="site" description="Stabilizes the basic form of H active site to accept a proton" evidence="1">
    <location>
        <position position="91"/>
    </location>
</feature>
<proteinExistence type="inferred from homology"/>
<gene>
    <name evidence="1" type="primary">pth</name>
</gene>
<organism>
    <name type="scientific">Latilactobacillus sakei</name>
    <name type="common">Lactobacillus sakei</name>
    <dbReference type="NCBI Taxonomy" id="1599"/>
    <lineage>
        <taxon>Bacteria</taxon>
        <taxon>Bacillati</taxon>
        <taxon>Bacillota</taxon>
        <taxon>Bacilli</taxon>
        <taxon>Lactobacillales</taxon>
        <taxon>Lactobacillaceae</taxon>
        <taxon>Latilactobacillus</taxon>
    </lineage>
</organism>
<reference key="1">
    <citation type="submission" date="1998-03" db="EMBL/GenBank/DDBJ databases">
        <title>Construction and analysis of a stable Lactobacillus sake mutant deficient in L-lactate dehydrogenase.</title>
        <authorList>
            <person name="Malleret C."/>
            <person name="Lauret R."/>
            <person name="Ehrlich S.D."/>
            <person name="Morel-Deville F."/>
            <person name="Zagorec M."/>
        </authorList>
    </citation>
    <scope>NUCLEOTIDE SEQUENCE [GENOMIC DNA]</scope>
    <source>
        <strain>207</strain>
    </source>
</reference>